<dbReference type="EC" id="2.7.4.1" evidence="1"/>
<dbReference type="EMBL" id="AL123456">
    <property type="protein sequence ID" value="CCP45789.1"/>
    <property type="molecule type" value="Genomic_DNA"/>
</dbReference>
<dbReference type="PIR" id="E70673">
    <property type="entry name" value="E70673"/>
</dbReference>
<dbReference type="RefSeq" id="WP_003415097.1">
    <property type="nucleotide sequence ID" value="NZ_KK339370.1"/>
</dbReference>
<dbReference type="SMR" id="P9WHV9"/>
<dbReference type="FunCoup" id="P9WHV9">
    <property type="interactions" value="65"/>
</dbReference>
<dbReference type="STRING" id="83332.Rv2984"/>
<dbReference type="PaxDb" id="83332-Rv2984"/>
<dbReference type="DNASU" id="887482"/>
<dbReference type="KEGG" id="mtu:Rv2984"/>
<dbReference type="TubercuList" id="Rv2984"/>
<dbReference type="eggNOG" id="COG0855">
    <property type="taxonomic scope" value="Bacteria"/>
</dbReference>
<dbReference type="InParanoid" id="P9WHV9"/>
<dbReference type="OrthoDB" id="9761456at2"/>
<dbReference type="PhylomeDB" id="P9WHV9"/>
<dbReference type="BRENDA" id="2.7.4.1">
    <property type="organism ID" value="3445"/>
</dbReference>
<dbReference type="Proteomes" id="UP000001584">
    <property type="component" value="Chromosome"/>
</dbReference>
<dbReference type="GO" id="GO:0016020">
    <property type="term" value="C:membrane"/>
    <property type="evidence" value="ECO:0000318"/>
    <property type="project" value="GO_Central"/>
</dbReference>
<dbReference type="GO" id="GO:0005886">
    <property type="term" value="C:plasma membrane"/>
    <property type="evidence" value="ECO:0007005"/>
    <property type="project" value="MTBBASE"/>
</dbReference>
<dbReference type="GO" id="GO:0009358">
    <property type="term" value="C:polyphosphate kinase complex"/>
    <property type="evidence" value="ECO:0007669"/>
    <property type="project" value="InterPro"/>
</dbReference>
<dbReference type="GO" id="GO:0005524">
    <property type="term" value="F:ATP binding"/>
    <property type="evidence" value="ECO:0007669"/>
    <property type="project" value="UniProtKB-KW"/>
</dbReference>
<dbReference type="GO" id="GO:0000287">
    <property type="term" value="F:magnesium ion binding"/>
    <property type="evidence" value="ECO:0000314"/>
    <property type="project" value="MTBBASE"/>
</dbReference>
<dbReference type="GO" id="GO:0008976">
    <property type="term" value="F:polyphosphate kinase activity"/>
    <property type="evidence" value="ECO:0000314"/>
    <property type="project" value="MTBBASE"/>
</dbReference>
<dbReference type="GO" id="GO:0071456">
    <property type="term" value="P:cellular response to hypoxia"/>
    <property type="evidence" value="ECO:0000315"/>
    <property type="project" value="UniProtKB"/>
</dbReference>
<dbReference type="GO" id="GO:0006799">
    <property type="term" value="P:polyphosphate biosynthetic process"/>
    <property type="evidence" value="ECO:0000314"/>
    <property type="project" value="MTBBASE"/>
</dbReference>
<dbReference type="CDD" id="cd09165">
    <property type="entry name" value="PLDc_PaPPK1_C1_like"/>
    <property type="match status" value="1"/>
</dbReference>
<dbReference type="FunFam" id="1.20.58.310:FF:000002">
    <property type="entry name" value="Polyphosphate kinase"/>
    <property type="match status" value="1"/>
</dbReference>
<dbReference type="FunFam" id="3.30.1840.10:FF:000002">
    <property type="entry name" value="Polyphosphate kinase"/>
    <property type="match status" value="1"/>
</dbReference>
<dbReference type="FunFam" id="3.30.870.10:FF:000001">
    <property type="entry name" value="Polyphosphate kinase"/>
    <property type="match status" value="1"/>
</dbReference>
<dbReference type="Gene3D" id="3.30.870.10">
    <property type="entry name" value="Endonuclease Chain A"/>
    <property type="match status" value="2"/>
</dbReference>
<dbReference type="Gene3D" id="3.30.1840.10">
    <property type="entry name" value="Polyphosphate kinase middle domain"/>
    <property type="match status" value="1"/>
</dbReference>
<dbReference type="Gene3D" id="1.20.58.310">
    <property type="entry name" value="Polyphosphate kinase N-terminal domain"/>
    <property type="match status" value="1"/>
</dbReference>
<dbReference type="HAMAP" id="MF_00347">
    <property type="entry name" value="Polyphosphate_kinase"/>
    <property type="match status" value="1"/>
</dbReference>
<dbReference type="InterPro" id="IPR003414">
    <property type="entry name" value="PP_kinase"/>
</dbReference>
<dbReference type="InterPro" id="IPR041108">
    <property type="entry name" value="PP_kinase_C_1"/>
</dbReference>
<dbReference type="InterPro" id="IPR024953">
    <property type="entry name" value="PP_kinase_middle"/>
</dbReference>
<dbReference type="InterPro" id="IPR036830">
    <property type="entry name" value="PP_kinase_middle_dom_sf"/>
</dbReference>
<dbReference type="InterPro" id="IPR025200">
    <property type="entry name" value="PPK_C_dom2"/>
</dbReference>
<dbReference type="InterPro" id="IPR025198">
    <property type="entry name" value="PPK_N_dom"/>
</dbReference>
<dbReference type="InterPro" id="IPR036832">
    <property type="entry name" value="PPK_N_dom_sf"/>
</dbReference>
<dbReference type="NCBIfam" id="TIGR03705">
    <property type="entry name" value="poly_P_kin"/>
    <property type="match status" value="1"/>
</dbReference>
<dbReference type="NCBIfam" id="NF003917">
    <property type="entry name" value="PRK05443.1-1"/>
    <property type="match status" value="1"/>
</dbReference>
<dbReference type="NCBIfam" id="NF003918">
    <property type="entry name" value="PRK05443.1-2"/>
    <property type="match status" value="1"/>
</dbReference>
<dbReference type="NCBIfam" id="NF003921">
    <property type="entry name" value="PRK05443.2-2"/>
    <property type="match status" value="1"/>
</dbReference>
<dbReference type="NCBIfam" id="NF003922">
    <property type="entry name" value="PRK05443.2-3"/>
    <property type="match status" value="1"/>
</dbReference>
<dbReference type="PANTHER" id="PTHR30218">
    <property type="entry name" value="POLYPHOSPHATE KINASE"/>
    <property type="match status" value="1"/>
</dbReference>
<dbReference type="PANTHER" id="PTHR30218:SF0">
    <property type="entry name" value="POLYPHOSPHATE KINASE"/>
    <property type="match status" value="1"/>
</dbReference>
<dbReference type="Pfam" id="PF02503">
    <property type="entry name" value="PP_kinase"/>
    <property type="match status" value="1"/>
</dbReference>
<dbReference type="Pfam" id="PF13090">
    <property type="entry name" value="PP_kinase_C"/>
    <property type="match status" value="1"/>
</dbReference>
<dbReference type="Pfam" id="PF17941">
    <property type="entry name" value="PP_kinase_C_1"/>
    <property type="match status" value="1"/>
</dbReference>
<dbReference type="Pfam" id="PF13089">
    <property type="entry name" value="PP_kinase_N"/>
    <property type="match status" value="1"/>
</dbReference>
<dbReference type="PIRSF" id="PIRSF015589">
    <property type="entry name" value="PP_kinase"/>
    <property type="match status" value="1"/>
</dbReference>
<dbReference type="SUPFAM" id="SSF56024">
    <property type="entry name" value="Phospholipase D/nuclease"/>
    <property type="match status" value="2"/>
</dbReference>
<dbReference type="SUPFAM" id="SSF143724">
    <property type="entry name" value="PHP14-like"/>
    <property type="match status" value="1"/>
</dbReference>
<dbReference type="SUPFAM" id="SSF140356">
    <property type="entry name" value="PPK N-terminal domain-like"/>
    <property type="match status" value="1"/>
</dbReference>
<reference key="1">
    <citation type="journal article" date="1998" name="Nature">
        <title>Deciphering the biology of Mycobacterium tuberculosis from the complete genome sequence.</title>
        <authorList>
            <person name="Cole S.T."/>
            <person name="Brosch R."/>
            <person name="Parkhill J."/>
            <person name="Garnier T."/>
            <person name="Churcher C.M."/>
            <person name="Harris D.E."/>
            <person name="Gordon S.V."/>
            <person name="Eiglmeier K."/>
            <person name="Gas S."/>
            <person name="Barry C.E. III"/>
            <person name="Tekaia F."/>
            <person name="Badcock K."/>
            <person name="Basham D."/>
            <person name="Brown D."/>
            <person name="Chillingworth T."/>
            <person name="Connor R."/>
            <person name="Davies R.M."/>
            <person name="Devlin K."/>
            <person name="Feltwell T."/>
            <person name="Gentles S."/>
            <person name="Hamlin N."/>
            <person name="Holroyd S."/>
            <person name="Hornsby T."/>
            <person name="Jagels K."/>
            <person name="Krogh A."/>
            <person name="McLean J."/>
            <person name="Moule S."/>
            <person name="Murphy L.D."/>
            <person name="Oliver S."/>
            <person name="Osborne J."/>
            <person name="Quail M.A."/>
            <person name="Rajandream M.A."/>
            <person name="Rogers J."/>
            <person name="Rutter S."/>
            <person name="Seeger K."/>
            <person name="Skelton S."/>
            <person name="Squares S."/>
            <person name="Squares R."/>
            <person name="Sulston J.E."/>
            <person name="Taylor K."/>
            <person name="Whitehead S."/>
            <person name="Barrell B.G."/>
        </authorList>
    </citation>
    <scope>NUCLEOTIDE SEQUENCE [LARGE SCALE GENOMIC DNA]</scope>
    <source>
        <strain>ATCC 25618 / H37Rv</strain>
    </source>
</reference>
<reference key="2">
    <citation type="journal article" date="2011" name="Mol. Cell. Proteomics">
        <title>Proteogenomic analysis of Mycobacterium tuberculosis by high resolution mass spectrometry.</title>
        <authorList>
            <person name="Kelkar D.S."/>
            <person name="Kumar D."/>
            <person name="Kumar P."/>
            <person name="Balakrishnan L."/>
            <person name="Muthusamy B."/>
            <person name="Yadav A.K."/>
            <person name="Shrivastava P."/>
            <person name="Marimuthu A."/>
            <person name="Anand S."/>
            <person name="Sundaram H."/>
            <person name="Kingsbury R."/>
            <person name="Harsha H.C."/>
            <person name="Nair B."/>
            <person name="Prasad T.S."/>
            <person name="Chauhan D.S."/>
            <person name="Katoch K."/>
            <person name="Katoch V.M."/>
            <person name="Kumar P."/>
            <person name="Chaerkady R."/>
            <person name="Ramachandran S."/>
            <person name="Dash D."/>
            <person name="Pandey A."/>
        </authorList>
    </citation>
    <scope>IDENTIFICATION BY MASS SPECTROMETRY [LARGE SCALE ANALYSIS]</scope>
    <source>
        <strain>ATCC 25618 / H37Rv</strain>
    </source>
</reference>
<name>PPK1_MYCTU</name>
<comment type="function">
    <text evidence="1">Catalyzes the reversible transfer of the terminal phosphate of ATP to form a long-chain polyphosphate (polyP).</text>
</comment>
<comment type="catalytic activity">
    <reaction evidence="1">
        <text>[phosphate](n) + ATP = [phosphate](n+1) + ADP</text>
        <dbReference type="Rhea" id="RHEA:19573"/>
        <dbReference type="Rhea" id="RHEA-COMP:9859"/>
        <dbReference type="Rhea" id="RHEA-COMP:14280"/>
        <dbReference type="ChEBI" id="CHEBI:16838"/>
        <dbReference type="ChEBI" id="CHEBI:30616"/>
        <dbReference type="ChEBI" id="CHEBI:456216"/>
        <dbReference type="EC" id="2.7.4.1"/>
    </reaction>
</comment>
<comment type="cofactor">
    <cofactor evidence="1">
        <name>Mg(2+)</name>
        <dbReference type="ChEBI" id="CHEBI:18420"/>
    </cofactor>
</comment>
<comment type="PTM">
    <text evidence="1">An intermediate of this reaction is the autophosphorylated ppk in which a phosphate is covalently linked to a histidine residue through a N-P bond.</text>
</comment>
<comment type="similarity">
    <text evidence="1">Belongs to the polyphosphate kinase 1 (PPK1) family.</text>
</comment>
<evidence type="ECO:0000255" key="1">
    <source>
        <dbReference type="HAMAP-Rule" id="MF_00347"/>
    </source>
</evidence>
<evidence type="ECO:0000256" key="2">
    <source>
        <dbReference type="SAM" id="MobiDB-lite"/>
    </source>
</evidence>
<feature type="chain" id="PRO_0000128648" description="Polyphosphate kinase">
    <location>
        <begin position="1"/>
        <end position="742"/>
    </location>
</feature>
<feature type="region of interest" description="Disordered" evidence="2">
    <location>
        <begin position="718"/>
        <end position="742"/>
    </location>
</feature>
<feature type="compositionally biased region" description="Basic and acidic residues" evidence="2">
    <location>
        <begin position="726"/>
        <end position="742"/>
    </location>
</feature>
<feature type="active site" description="Phosphohistidine intermediate" evidence="1">
    <location>
        <position position="491"/>
    </location>
</feature>
<feature type="binding site" evidence="1">
    <location>
        <position position="91"/>
    </location>
    <ligand>
        <name>ATP</name>
        <dbReference type="ChEBI" id="CHEBI:30616"/>
    </ligand>
</feature>
<feature type="binding site" evidence="1">
    <location>
        <position position="431"/>
    </location>
    <ligand>
        <name>Mg(2+)</name>
        <dbReference type="ChEBI" id="CHEBI:18420"/>
    </ligand>
</feature>
<feature type="binding site" evidence="1">
    <location>
        <position position="461"/>
    </location>
    <ligand>
        <name>Mg(2+)</name>
        <dbReference type="ChEBI" id="CHEBI:18420"/>
    </ligand>
</feature>
<feature type="binding site" evidence="1">
    <location>
        <position position="524"/>
    </location>
    <ligand>
        <name>ATP</name>
        <dbReference type="ChEBI" id="CHEBI:30616"/>
    </ligand>
</feature>
<feature type="binding site" evidence="1">
    <location>
        <position position="624"/>
    </location>
    <ligand>
        <name>ATP</name>
        <dbReference type="ChEBI" id="CHEBI:30616"/>
    </ligand>
</feature>
<feature type="binding site" evidence="1">
    <location>
        <position position="652"/>
    </location>
    <ligand>
        <name>ATP</name>
        <dbReference type="ChEBI" id="CHEBI:30616"/>
    </ligand>
</feature>
<proteinExistence type="evidence at protein level"/>
<organism>
    <name type="scientific">Mycobacterium tuberculosis (strain ATCC 25618 / H37Rv)</name>
    <dbReference type="NCBI Taxonomy" id="83332"/>
    <lineage>
        <taxon>Bacteria</taxon>
        <taxon>Bacillati</taxon>
        <taxon>Actinomycetota</taxon>
        <taxon>Actinomycetes</taxon>
        <taxon>Mycobacteriales</taxon>
        <taxon>Mycobacteriaceae</taxon>
        <taxon>Mycobacterium</taxon>
        <taxon>Mycobacterium tuberculosis complex</taxon>
    </lineage>
</organism>
<accession>P9WHV9</accession>
<accession>L0TCT9</accession>
<accession>P65768</accession>
<accession>P95111</accession>
<sequence length="742" mass="83039">MMSNDRKVTEIENSPVTEVRPEEHAWYPDDSALAAPPAATPAAISDQLPSDRYLNRELSWLDFNARVLALAADKSMPLLERAKFLAIFASNLDEFYMVRVAGLKRRDEMGLSVRSADGLTPREQLGRIGEQTQQLASRHARVFLDSVLPALGEEGIYIVTWADLDQAERDRLSTYFNEQVFPVLTPLAVDPAHPFPFVSGLSLNLAVTVRQPEDGTQHFARVKVPDNVDRFVELAAREASEEAAGTEGRTALRFLPMEELIAAFLPVLFPGMEIVEHHAFRITRNADFEVEEDRDEDLLQALERELARRRFGSPVRLEIADDMTESMLELLLRELDVHPGDVIEVPGLLDLSSLWQIYAVDRPTLKDRTFVPATHPAFAERETPKSIFATLREGDVLVHHPYDSFSTSVQRFIEQAAADPNVLAIKQTLYRTSGDSPIVRALIDAAEAGKQVVALVEIKARFDEQANIAWARALEQAGVHVAYGLVGLKTHCKTALVVRREGPTIRRYCHVGTGNYNSKTARLYEDVGLLTAAPDIGADLTDLFNSLTGYSRKLSYRNLLVAPHGIRAGIIDRVEREVAAHRAEGAHNGKGRIRLKMNALVDEQVIDALYRASRAGVRIEVVVRGICALRPGAQGISENIIVRSILGRFLEHSRILHFRAIDEFWIGSADMMHRNLDRRVEVMAQVKNPRLTAQLDELFESALDPCTRCWELGPDGQWTASPQEGHSVRDHQESLMERHRSP</sequence>
<protein>
    <recommendedName>
        <fullName evidence="1">Polyphosphate kinase</fullName>
        <ecNumber evidence="1">2.7.4.1</ecNumber>
    </recommendedName>
    <alternativeName>
        <fullName evidence="1">ATP-polyphosphate phosphotransferase</fullName>
    </alternativeName>
    <alternativeName>
        <fullName evidence="1">Polyphosphoric acid kinase</fullName>
    </alternativeName>
</protein>
<keyword id="KW-0067">ATP-binding</keyword>
<keyword id="KW-0418">Kinase</keyword>
<keyword id="KW-0460">Magnesium</keyword>
<keyword id="KW-0479">Metal-binding</keyword>
<keyword id="KW-0547">Nucleotide-binding</keyword>
<keyword id="KW-0597">Phosphoprotein</keyword>
<keyword id="KW-1185">Reference proteome</keyword>
<keyword id="KW-0808">Transferase</keyword>
<gene>
    <name evidence="1" type="primary">ppk</name>
    <name type="ordered locus">Rv2984</name>
    <name type="ORF">MTCY349.03c</name>
</gene>